<evidence type="ECO:0000250" key="1"/>
<evidence type="ECO:0000255" key="2"/>
<evidence type="ECO:0000305" key="3"/>
<feature type="transit peptide" description="Mitochondrion" evidence="2">
    <location>
        <begin position="1"/>
        <end position="16"/>
    </location>
</feature>
<feature type="chain" id="PRO_0000029893" description="Dihydroorotate dehydrogenase (quinone), mitochondrial">
    <location>
        <begin position="17"/>
        <end position="445"/>
    </location>
</feature>
<feature type="transmembrane region" description="Helical" evidence="2">
    <location>
        <begin position="39"/>
        <end position="56"/>
    </location>
</feature>
<feature type="active site" description="Nucleophile" evidence="1">
    <location>
        <position position="254"/>
    </location>
</feature>
<feature type="binding site" evidence="1">
    <location>
        <begin position="124"/>
        <end position="128"/>
    </location>
    <ligand>
        <name>FMN</name>
        <dbReference type="ChEBI" id="CHEBI:58210"/>
    </ligand>
</feature>
<feature type="binding site" evidence="1">
    <location>
        <position position="128"/>
    </location>
    <ligand>
        <name>substrate</name>
    </ligand>
</feature>
<feature type="binding site" evidence="1">
    <location>
        <position position="148"/>
    </location>
    <ligand>
        <name>FMN</name>
        <dbReference type="ChEBI" id="CHEBI:58210"/>
    </ligand>
</feature>
<feature type="binding site" evidence="1">
    <location>
        <begin position="173"/>
        <end position="177"/>
    </location>
    <ligand>
        <name>substrate</name>
    </ligand>
</feature>
<feature type="binding site" evidence="1">
    <location>
        <position position="221"/>
    </location>
    <ligand>
        <name>FMN</name>
        <dbReference type="ChEBI" id="CHEBI:58210"/>
    </ligand>
</feature>
<feature type="binding site" evidence="1">
    <location>
        <begin position="251"/>
        <end position="256"/>
    </location>
    <ligand>
        <name>substrate</name>
    </ligand>
</feature>
<feature type="binding site" evidence="1">
    <location>
        <position position="251"/>
    </location>
    <ligand>
        <name>FMN</name>
        <dbReference type="ChEBI" id="CHEBI:58210"/>
    </ligand>
</feature>
<feature type="binding site" evidence="1">
    <location>
        <position position="302"/>
    </location>
    <ligand>
        <name>FMN</name>
        <dbReference type="ChEBI" id="CHEBI:58210"/>
    </ligand>
</feature>
<feature type="binding site" evidence="1">
    <location>
        <position position="330"/>
    </location>
    <ligand>
        <name>FMN</name>
        <dbReference type="ChEBI" id="CHEBI:58210"/>
    </ligand>
</feature>
<feature type="binding site" evidence="1">
    <location>
        <begin position="331"/>
        <end position="332"/>
    </location>
    <ligand>
        <name>substrate</name>
    </ligand>
</feature>
<feature type="binding site" evidence="1">
    <location>
        <position position="356"/>
    </location>
    <ligand>
        <name>FMN</name>
        <dbReference type="ChEBI" id="CHEBI:58210"/>
    </ligand>
</feature>
<feature type="binding site" evidence="1">
    <location>
        <position position="386"/>
    </location>
    <ligand>
        <name>FMN</name>
        <dbReference type="ChEBI" id="CHEBI:58210"/>
    </ligand>
</feature>
<feature type="binding site" evidence="1">
    <location>
        <begin position="407"/>
        <end position="408"/>
    </location>
    <ligand>
        <name>FMN</name>
        <dbReference type="ChEBI" id="CHEBI:58210"/>
    </ligand>
</feature>
<organism>
    <name type="scientific">Kluyveromyces lactis (strain ATCC 8585 / CBS 2359 / DSM 70799 / NBRC 1267 / NRRL Y-1140 / WM37)</name>
    <name type="common">Yeast</name>
    <name type="synonym">Candida sphaerica</name>
    <dbReference type="NCBI Taxonomy" id="284590"/>
    <lineage>
        <taxon>Eukaryota</taxon>
        <taxon>Fungi</taxon>
        <taxon>Dikarya</taxon>
        <taxon>Ascomycota</taxon>
        <taxon>Saccharomycotina</taxon>
        <taxon>Saccharomycetes</taxon>
        <taxon>Saccharomycetales</taxon>
        <taxon>Saccharomycetaceae</taxon>
        <taxon>Kluyveromyces</taxon>
    </lineage>
</organism>
<name>PYRD2_KLULA</name>
<protein>
    <recommendedName>
        <fullName>Dihydroorotate dehydrogenase (quinone), mitochondrial</fullName>
        <shortName>DHOD</shortName>
        <shortName>DHODase</shortName>
        <shortName>DHOdehase</shortName>
        <ecNumber>1.3.5.2</ecNumber>
    </recommendedName>
    <alternativeName>
        <fullName>Dihydroorotate oxidase</fullName>
    </alternativeName>
</protein>
<proteinExistence type="inferred from homology"/>
<comment type="function">
    <text evidence="1">Catalyzes the conversion of dihydroorotate to orotate with quinone as electron acceptor.</text>
</comment>
<comment type="catalytic activity">
    <reaction>
        <text>(S)-dihydroorotate + a quinone = orotate + a quinol</text>
        <dbReference type="Rhea" id="RHEA:30187"/>
        <dbReference type="ChEBI" id="CHEBI:24646"/>
        <dbReference type="ChEBI" id="CHEBI:30839"/>
        <dbReference type="ChEBI" id="CHEBI:30864"/>
        <dbReference type="ChEBI" id="CHEBI:132124"/>
        <dbReference type="EC" id="1.3.5.2"/>
    </reaction>
</comment>
<comment type="cofactor">
    <cofactor evidence="1">
        <name>FMN</name>
        <dbReference type="ChEBI" id="CHEBI:58210"/>
    </cofactor>
    <text evidence="1">Binds 1 FMN per subunit.</text>
</comment>
<comment type="pathway">
    <text>Pyrimidine metabolism; UMP biosynthesis via de novo pathway; orotate from (S)-dihydroorotate (quinone route): step 1/1.</text>
</comment>
<comment type="subcellular location">
    <subcellularLocation>
        <location evidence="1">Mitochondrion inner membrane</location>
        <topology evidence="3">Single-pass membrane protein</topology>
    </subcellularLocation>
</comment>
<comment type="miscellaneous">
    <text>K.lactis has two isoforms of DHODase, a cytoplasmic isoform and a mitochondrial isoform.</text>
</comment>
<comment type="similarity">
    <text evidence="3">Belongs to the dihydroorotate dehydrogenase family. Type 2 subfamily.</text>
</comment>
<reference key="1">
    <citation type="journal article" date="2004" name="Nature">
        <title>Genome evolution in yeasts.</title>
        <authorList>
            <person name="Dujon B."/>
            <person name="Sherman D."/>
            <person name="Fischer G."/>
            <person name="Durrens P."/>
            <person name="Casaregola S."/>
            <person name="Lafontaine I."/>
            <person name="de Montigny J."/>
            <person name="Marck C."/>
            <person name="Neuveglise C."/>
            <person name="Talla E."/>
            <person name="Goffard N."/>
            <person name="Frangeul L."/>
            <person name="Aigle M."/>
            <person name="Anthouard V."/>
            <person name="Babour A."/>
            <person name="Barbe V."/>
            <person name="Barnay S."/>
            <person name="Blanchin S."/>
            <person name="Beckerich J.-M."/>
            <person name="Beyne E."/>
            <person name="Bleykasten C."/>
            <person name="Boisrame A."/>
            <person name="Boyer J."/>
            <person name="Cattolico L."/>
            <person name="Confanioleri F."/>
            <person name="de Daruvar A."/>
            <person name="Despons L."/>
            <person name="Fabre E."/>
            <person name="Fairhead C."/>
            <person name="Ferry-Dumazet H."/>
            <person name="Groppi A."/>
            <person name="Hantraye F."/>
            <person name="Hennequin C."/>
            <person name="Jauniaux N."/>
            <person name="Joyet P."/>
            <person name="Kachouri R."/>
            <person name="Kerrest A."/>
            <person name="Koszul R."/>
            <person name="Lemaire M."/>
            <person name="Lesur I."/>
            <person name="Ma L."/>
            <person name="Muller H."/>
            <person name="Nicaud J.-M."/>
            <person name="Nikolski M."/>
            <person name="Oztas S."/>
            <person name="Ozier-Kalogeropoulos O."/>
            <person name="Pellenz S."/>
            <person name="Potier S."/>
            <person name="Richard G.-F."/>
            <person name="Straub M.-L."/>
            <person name="Suleau A."/>
            <person name="Swennen D."/>
            <person name="Tekaia F."/>
            <person name="Wesolowski-Louvel M."/>
            <person name="Westhof E."/>
            <person name="Wirth B."/>
            <person name="Zeniou-Meyer M."/>
            <person name="Zivanovic Y."/>
            <person name="Bolotin-Fukuhara M."/>
            <person name="Thierry A."/>
            <person name="Bouchier C."/>
            <person name="Caudron B."/>
            <person name="Scarpelli C."/>
            <person name="Gaillardin C."/>
            <person name="Weissenbach J."/>
            <person name="Wincker P."/>
            <person name="Souciet J.-L."/>
        </authorList>
    </citation>
    <scope>NUCLEOTIDE SEQUENCE [LARGE SCALE GENOMIC DNA]</scope>
    <source>
        <strain>ATCC 8585 / CBS 2359 / DSM 70799 / NBRC 1267 / NRRL Y-1140 / WM37</strain>
    </source>
</reference>
<dbReference type="EC" id="1.3.5.2"/>
<dbReference type="EMBL" id="CR382123">
    <property type="protein sequence ID" value="CAH01462.1"/>
    <property type="molecule type" value="Genomic_DNA"/>
</dbReference>
<dbReference type="RefSeq" id="XP_452611.1">
    <property type="nucleotide sequence ID" value="XM_452611.1"/>
</dbReference>
<dbReference type="SMR" id="Q6CTX8"/>
<dbReference type="STRING" id="284590.Q6CTX8"/>
<dbReference type="PaxDb" id="284590-Q6CTX8"/>
<dbReference type="KEGG" id="kla:KLLA0_C09240g"/>
<dbReference type="eggNOG" id="KOG1436">
    <property type="taxonomic scope" value="Eukaryota"/>
</dbReference>
<dbReference type="HOGENOM" id="CLU_013640_4_0_1"/>
<dbReference type="InParanoid" id="Q6CTX8"/>
<dbReference type="OMA" id="IYGTDTR"/>
<dbReference type="UniPathway" id="UPA00070">
    <property type="reaction ID" value="UER00946"/>
</dbReference>
<dbReference type="Proteomes" id="UP000000598">
    <property type="component" value="Chromosome C"/>
</dbReference>
<dbReference type="GO" id="GO:0005743">
    <property type="term" value="C:mitochondrial inner membrane"/>
    <property type="evidence" value="ECO:0007669"/>
    <property type="project" value="UniProtKB-SubCell"/>
</dbReference>
<dbReference type="GO" id="GO:0106430">
    <property type="term" value="F:dihydroorotate dehydrogenase (quinone) activity"/>
    <property type="evidence" value="ECO:0007669"/>
    <property type="project" value="UniProtKB-EC"/>
</dbReference>
<dbReference type="GO" id="GO:0006207">
    <property type="term" value="P:'de novo' pyrimidine nucleobase biosynthetic process"/>
    <property type="evidence" value="ECO:0007669"/>
    <property type="project" value="InterPro"/>
</dbReference>
<dbReference type="GO" id="GO:0044205">
    <property type="term" value="P:'de novo' UMP biosynthetic process"/>
    <property type="evidence" value="ECO:0007669"/>
    <property type="project" value="UniProtKB-UniPathway"/>
</dbReference>
<dbReference type="CDD" id="cd04738">
    <property type="entry name" value="DHOD_2_like"/>
    <property type="match status" value="1"/>
</dbReference>
<dbReference type="FunFam" id="3.20.20.70:FF:000066">
    <property type="entry name" value="Dihydroorotate dehydrogenase (quinone), mitochondrial"/>
    <property type="match status" value="1"/>
</dbReference>
<dbReference type="Gene3D" id="3.20.20.70">
    <property type="entry name" value="Aldolase class I"/>
    <property type="match status" value="1"/>
</dbReference>
<dbReference type="InterPro" id="IPR013785">
    <property type="entry name" value="Aldolase_TIM"/>
</dbReference>
<dbReference type="InterPro" id="IPR050074">
    <property type="entry name" value="DHO_dehydrogenase"/>
</dbReference>
<dbReference type="InterPro" id="IPR005719">
    <property type="entry name" value="Dihydroorotate_DH_2"/>
</dbReference>
<dbReference type="InterPro" id="IPR005720">
    <property type="entry name" value="Dihydroorotate_DH_cat"/>
</dbReference>
<dbReference type="InterPro" id="IPR001295">
    <property type="entry name" value="Dihydroorotate_DH_CS"/>
</dbReference>
<dbReference type="NCBIfam" id="NF003645">
    <property type="entry name" value="PRK05286.1-2"/>
    <property type="match status" value="1"/>
</dbReference>
<dbReference type="NCBIfam" id="NF003652">
    <property type="entry name" value="PRK05286.2-5"/>
    <property type="match status" value="1"/>
</dbReference>
<dbReference type="NCBIfam" id="TIGR01036">
    <property type="entry name" value="pyrD_sub2"/>
    <property type="match status" value="1"/>
</dbReference>
<dbReference type="PANTHER" id="PTHR48109:SF4">
    <property type="entry name" value="DIHYDROOROTATE DEHYDROGENASE (QUINONE), MITOCHONDRIAL"/>
    <property type="match status" value="1"/>
</dbReference>
<dbReference type="PANTHER" id="PTHR48109">
    <property type="entry name" value="DIHYDROOROTATE DEHYDROGENASE (QUINONE), MITOCHONDRIAL-RELATED"/>
    <property type="match status" value="1"/>
</dbReference>
<dbReference type="Pfam" id="PF01180">
    <property type="entry name" value="DHO_dh"/>
    <property type="match status" value="1"/>
</dbReference>
<dbReference type="SUPFAM" id="SSF51395">
    <property type="entry name" value="FMN-linked oxidoreductases"/>
    <property type="match status" value="1"/>
</dbReference>
<dbReference type="PROSITE" id="PS00911">
    <property type="entry name" value="DHODEHASE_1"/>
    <property type="match status" value="1"/>
</dbReference>
<dbReference type="PROSITE" id="PS00912">
    <property type="entry name" value="DHODEHASE_2"/>
    <property type="match status" value="1"/>
</dbReference>
<accession>Q6CTX8</accession>
<keyword id="KW-0285">Flavoprotein</keyword>
<keyword id="KW-0288">FMN</keyword>
<keyword id="KW-0472">Membrane</keyword>
<keyword id="KW-0496">Mitochondrion</keyword>
<keyword id="KW-0999">Mitochondrion inner membrane</keyword>
<keyword id="KW-0560">Oxidoreductase</keyword>
<keyword id="KW-0665">Pyrimidine biosynthesis</keyword>
<keyword id="KW-1185">Reference proteome</keyword>
<keyword id="KW-0809">Transit peptide</keyword>
<keyword id="KW-0812">Transmembrane</keyword>
<keyword id="KW-1133">Transmembrane helix</keyword>
<sequence length="445" mass="48071">MNSGFPRILSKKLFTLNQSQFFVKNGMVPLKAGISGPKLLKYTVGIAIGSFAGFYFSNSRSAFHEYVLCPMLRLVTPDAEDGHKLGIWFLKNGLAPRLWFDNDDKVLNVNIFGKKLTNPIGCAAGLDKNGDAIDGILSGGFGYIEIGSVTPLPQPGNPRPRFFRLPLDDAVINRYGFNSSGHDTVVNTLQSRITSFINSYMFKDNSVENLSLYKDKLLGVNLGKNKTGDEVQDYLKGVESFQKYADVLVINVSSPNTPGLRSLQKESILTDLLTQVVAKRDSLVTSGNALGAKTHKPPVLVKVAPDLVEEEIKSIAEAAKKSKVDGIIISNTTIQRPTTLITEDSDLVSQAGGLSGKPLKPLALKALKTMAKYTKGSGLVLVGCGGISSGADAIEFAKAGASMVELYTAYAYKGPGLIAKIKDETTELLKKENKTWSEIIGEDIK</sequence>
<gene>
    <name type="primary">URA9</name>
    <name type="ordered locus">KLLA0C09240g</name>
</gene>